<organism>
    <name type="scientific">Escherichia coli (strain ATCC 8739 / DSM 1576 / NBRC 3972 / NCIMB 8545 / WDCM 00012 / Crooks)</name>
    <dbReference type="NCBI Taxonomy" id="481805"/>
    <lineage>
        <taxon>Bacteria</taxon>
        <taxon>Pseudomonadati</taxon>
        <taxon>Pseudomonadota</taxon>
        <taxon>Gammaproteobacteria</taxon>
        <taxon>Enterobacterales</taxon>
        <taxon>Enterobacteriaceae</taxon>
        <taxon>Escherichia</taxon>
    </lineage>
</organism>
<accession>B1IZQ9</accession>
<dbReference type="EC" id="2.4.2.21" evidence="1"/>
<dbReference type="EMBL" id="CP000946">
    <property type="protein sequence ID" value="ACA77294.1"/>
    <property type="molecule type" value="Genomic_DNA"/>
</dbReference>
<dbReference type="RefSeq" id="WP_001193794.1">
    <property type="nucleotide sequence ID" value="NZ_MTFT01000023.1"/>
</dbReference>
<dbReference type="SMR" id="B1IZQ9"/>
<dbReference type="KEGG" id="ecl:EcolC_1637"/>
<dbReference type="HOGENOM" id="CLU_002982_0_0_6"/>
<dbReference type="UniPathway" id="UPA00061">
    <property type="reaction ID" value="UER00516"/>
</dbReference>
<dbReference type="GO" id="GO:0008939">
    <property type="term" value="F:nicotinate-nucleotide-dimethylbenzimidazole phosphoribosyltransferase activity"/>
    <property type="evidence" value="ECO:0007669"/>
    <property type="project" value="UniProtKB-UniRule"/>
</dbReference>
<dbReference type="GO" id="GO:0009236">
    <property type="term" value="P:cobalamin biosynthetic process"/>
    <property type="evidence" value="ECO:0007669"/>
    <property type="project" value="UniProtKB-KW"/>
</dbReference>
<dbReference type="CDD" id="cd02439">
    <property type="entry name" value="DMB-PRT_CobT"/>
    <property type="match status" value="1"/>
</dbReference>
<dbReference type="FunFam" id="1.10.1610.10:FF:000001">
    <property type="entry name" value="Nicotinate-nucleotide--dimethylbenzimidazole phosphoribosyltransferase"/>
    <property type="match status" value="1"/>
</dbReference>
<dbReference type="FunFam" id="3.40.50.10210:FF:000001">
    <property type="entry name" value="Nicotinate-nucleotide--dimethylbenzimidazole phosphoribosyltransferase"/>
    <property type="match status" value="1"/>
</dbReference>
<dbReference type="Gene3D" id="1.10.1610.10">
    <property type="match status" value="1"/>
</dbReference>
<dbReference type="Gene3D" id="3.40.50.10210">
    <property type="match status" value="1"/>
</dbReference>
<dbReference type="HAMAP" id="MF_00230">
    <property type="entry name" value="CobT"/>
    <property type="match status" value="1"/>
</dbReference>
<dbReference type="InterPro" id="IPR003200">
    <property type="entry name" value="Nict_dMeBzImd_PRibTrfase"/>
</dbReference>
<dbReference type="InterPro" id="IPR017846">
    <property type="entry name" value="Nict_dMeBzImd_PRibTrfase_bact"/>
</dbReference>
<dbReference type="InterPro" id="IPR023195">
    <property type="entry name" value="Nict_dMeBzImd_PRibTrfase_N"/>
</dbReference>
<dbReference type="InterPro" id="IPR036087">
    <property type="entry name" value="Nict_dMeBzImd_PRibTrfase_sf"/>
</dbReference>
<dbReference type="NCBIfam" id="TIGR03160">
    <property type="entry name" value="cobT_DBIPRT"/>
    <property type="match status" value="1"/>
</dbReference>
<dbReference type="NCBIfam" id="NF000996">
    <property type="entry name" value="PRK00105.1"/>
    <property type="match status" value="1"/>
</dbReference>
<dbReference type="PANTHER" id="PTHR43463">
    <property type="entry name" value="NICOTINATE-NUCLEOTIDE--DIMETHYLBENZIMIDAZOLE PHOSPHORIBOSYLTRANSFERASE"/>
    <property type="match status" value="1"/>
</dbReference>
<dbReference type="PANTHER" id="PTHR43463:SF1">
    <property type="entry name" value="NICOTINATE-NUCLEOTIDE--DIMETHYLBENZIMIDAZOLE PHOSPHORIBOSYLTRANSFERASE"/>
    <property type="match status" value="1"/>
</dbReference>
<dbReference type="Pfam" id="PF02277">
    <property type="entry name" value="DBI_PRT"/>
    <property type="match status" value="1"/>
</dbReference>
<dbReference type="SUPFAM" id="SSF52733">
    <property type="entry name" value="Nicotinate mononucleotide:5,6-dimethylbenzimidazole phosphoribosyltransferase (CobT)"/>
    <property type="match status" value="1"/>
</dbReference>
<feature type="chain" id="PRO_1000078242" description="Nicotinate-nucleotide--dimethylbenzimidazole phosphoribosyltransferase">
    <location>
        <begin position="1"/>
        <end position="359"/>
    </location>
</feature>
<feature type="active site" description="Proton acceptor" evidence="1">
    <location>
        <position position="318"/>
    </location>
</feature>
<comment type="function">
    <text evidence="1">Catalyzes the synthesis of alpha-ribazole-5'-phosphate from nicotinate mononucleotide (NAMN) and 5,6-dimethylbenzimidazole (DMB).</text>
</comment>
<comment type="catalytic activity">
    <reaction evidence="1">
        <text>5,6-dimethylbenzimidazole + nicotinate beta-D-ribonucleotide = alpha-ribazole 5'-phosphate + nicotinate + H(+)</text>
        <dbReference type="Rhea" id="RHEA:11196"/>
        <dbReference type="ChEBI" id="CHEBI:15378"/>
        <dbReference type="ChEBI" id="CHEBI:15890"/>
        <dbReference type="ChEBI" id="CHEBI:32544"/>
        <dbReference type="ChEBI" id="CHEBI:57502"/>
        <dbReference type="ChEBI" id="CHEBI:57918"/>
        <dbReference type="EC" id="2.4.2.21"/>
    </reaction>
</comment>
<comment type="pathway">
    <text evidence="1">Nucleoside biosynthesis; alpha-ribazole biosynthesis; alpha-ribazole from 5,6-dimethylbenzimidazole: step 1/2.</text>
</comment>
<comment type="subunit">
    <text evidence="1">Homodimer.</text>
</comment>
<comment type="similarity">
    <text evidence="1">Belongs to the CobT family.</text>
</comment>
<protein>
    <recommendedName>
        <fullName evidence="1">Nicotinate-nucleotide--dimethylbenzimidazole phosphoribosyltransferase</fullName>
        <shortName evidence="1">NN:DBI PRT</shortName>
        <ecNumber evidence="1">2.4.2.21</ecNumber>
    </recommendedName>
    <alternativeName>
        <fullName evidence="1">N(1)-alpha-phosphoribosyltransferase</fullName>
    </alternativeName>
</protein>
<reference key="1">
    <citation type="submission" date="2008-02" db="EMBL/GenBank/DDBJ databases">
        <title>Complete sequence of Escherichia coli C str. ATCC 8739.</title>
        <authorList>
            <person name="Copeland A."/>
            <person name="Lucas S."/>
            <person name="Lapidus A."/>
            <person name="Glavina del Rio T."/>
            <person name="Dalin E."/>
            <person name="Tice H."/>
            <person name="Bruce D."/>
            <person name="Goodwin L."/>
            <person name="Pitluck S."/>
            <person name="Kiss H."/>
            <person name="Brettin T."/>
            <person name="Detter J.C."/>
            <person name="Han C."/>
            <person name="Kuske C.R."/>
            <person name="Schmutz J."/>
            <person name="Larimer F."/>
            <person name="Land M."/>
            <person name="Hauser L."/>
            <person name="Kyrpides N."/>
            <person name="Mikhailova N."/>
            <person name="Ingram L."/>
            <person name="Richardson P."/>
        </authorList>
    </citation>
    <scope>NUCLEOTIDE SEQUENCE [LARGE SCALE GENOMIC DNA]</scope>
    <source>
        <strain>ATCC 8739 / DSM 1576 / NBRC 3972 / NCIMB 8545 / WDCM 00012 / Crooks</strain>
    </source>
</reference>
<gene>
    <name evidence="1" type="primary">cobT</name>
    <name type="ordered locus">EcolC_1637</name>
</gene>
<proteinExistence type="inferred from homology"/>
<evidence type="ECO:0000255" key="1">
    <source>
        <dbReference type="HAMAP-Rule" id="MF_00230"/>
    </source>
</evidence>
<name>COBT_ECOLC</name>
<keyword id="KW-0169">Cobalamin biosynthesis</keyword>
<keyword id="KW-0328">Glycosyltransferase</keyword>
<keyword id="KW-0808">Transferase</keyword>
<sequence length="359" mass="36918">MQTLADLLNTIPAIDPAAMSRAQRHIDGLLKPVGSLGRLEALAIQLAGMPGLNGIPHVGKKAVLVMCADHGVWEEGVAISPKEVTAIQAENMTRGTTGVCVLAAQAGANVHVVDVGIDTAEPIPGLINMRVARGSGNIASAPAMSRRQAEKLLLDVICYTRELAKNGVTLFGVGELGMANTTPAAAIVSTITGRDPEEVVGIGANLPTDKLANKIDVVRRAITLNQPNPQDGVDVLAKVGGFDLVGMAGVMLGAASCGLPVLLDGFLSYAAALAACQMSPAIKPYLTPSHLSAEKGARIALSHLGLEPYLDMEMRLGEGSGAALAMPIIEAACAIYNNMGELAASNIVLPGNTTSDLNS</sequence>